<evidence type="ECO:0000255" key="1">
    <source>
        <dbReference type="HAMAP-Rule" id="MF_00700"/>
    </source>
</evidence>
<reference key="1">
    <citation type="journal article" date="2010" name="Proc. Natl. Acad. Sci. U.S.A.">
        <title>Nitrosopumilus maritimus genome reveals unique mechanisms for nitrification and autotrophy in globally distributed marine crenarchaea.</title>
        <authorList>
            <person name="Walker C.B."/>
            <person name="de la Torre J.R."/>
            <person name="Klotz M.G."/>
            <person name="Urakawa H."/>
            <person name="Pinel N."/>
            <person name="Arp D.J."/>
            <person name="Brochier-Armanet C."/>
            <person name="Chain P.S."/>
            <person name="Chan P.P."/>
            <person name="Gollabgir A."/>
            <person name="Hemp J."/>
            <person name="Hugler M."/>
            <person name="Karr E.A."/>
            <person name="Konneke M."/>
            <person name="Shin M."/>
            <person name="Lawton T.J."/>
            <person name="Lowe T."/>
            <person name="Martens-Habbena W."/>
            <person name="Sayavedra-Soto L.A."/>
            <person name="Lang D."/>
            <person name="Sievert S.M."/>
            <person name="Rosenzweig A.C."/>
            <person name="Manning G."/>
            <person name="Stahl D.A."/>
        </authorList>
    </citation>
    <scope>NUCLEOTIDE SEQUENCE [LARGE SCALE GENOMIC DNA]</scope>
    <source>
        <strain>SCM1</strain>
    </source>
</reference>
<comment type="function">
    <text evidence="1">Catalytic subunit of DNA primase, an RNA polymerase that catalyzes the synthesis of short RNA molecules used as primers for DNA polymerase during DNA replication. The small subunit contains the primase catalytic core and has DNA synthesis activity on its own. Binding to the large subunit stabilizes and modulates the activity, increasing the rate of DNA synthesis while decreasing the length of the DNA fragments, and conferring RNA synthesis capability. The DNA polymerase activity may enable DNA primase to also catalyze primer extension after primer synthesis. May also play a role in DNA repair.</text>
</comment>
<comment type="cofactor">
    <cofactor evidence="1">
        <name>Mg(2+)</name>
        <dbReference type="ChEBI" id="CHEBI:18420"/>
    </cofactor>
    <cofactor evidence="1">
        <name>Mn(2+)</name>
        <dbReference type="ChEBI" id="CHEBI:29035"/>
    </cofactor>
</comment>
<comment type="subunit">
    <text evidence="1">Heterodimer of a small subunit (PriS) and a large subunit (PriL).</text>
</comment>
<comment type="similarity">
    <text evidence="1">Belongs to the eukaryotic-type primase small subunit family.</text>
</comment>
<feature type="chain" id="PRO_1000192553" description="DNA primase small subunit PriS">
    <location>
        <begin position="1"/>
        <end position="373"/>
    </location>
</feature>
<feature type="active site" evidence="1">
    <location>
        <position position="95"/>
    </location>
</feature>
<feature type="active site" evidence="1">
    <location>
        <position position="97"/>
    </location>
</feature>
<feature type="active site" evidence="1">
    <location>
        <position position="281"/>
    </location>
</feature>
<gene>
    <name evidence="1" type="primary">priS</name>
    <name type="synonym">priA</name>
    <name type="ordered locus">Nmar_0066</name>
</gene>
<name>PRIS_NITMS</name>
<protein>
    <recommendedName>
        <fullName evidence="1">DNA primase small subunit PriS</fullName>
        <ecNumber evidence="1">2.7.7.-</ecNumber>
    </recommendedName>
</protein>
<accession>A9A557</accession>
<keyword id="KW-0235">DNA replication</keyword>
<keyword id="KW-0240">DNA-directed RNA polymerase</keyword>
<keyword id="KW-0460">Magnesium</keyword>
<keyword id="KW-0464">Manganese</keyword>
<keyword id="KW-0479">Metal-binding</keyword>
<keyword id="KW-0548">Nucleotidyltransferase</keyword>
<keyword id="KW-0639">Primosome</keyword>
<keyword id="KW-1185">Reference proteome</keyword>
<keyword id="KW-0804">Transcription</keyword>
<keyword id="KW-0808">Transferase</keyword>
<organism>
    <name type="scientific">Nitrosopumilus maritimus (strain SCM1)</name>
    <dbReference type="NCBI Taxonomy" id="436308"/>
    <lineage>
        <taxon>Archaea</taxon>
        <taxon>Nitrososphaerota</taxon>
        <taxon>Nitrososphaeria</taxon>
        <taxon>Nitrosopumilales</taxon>
        <taxon>Nitrosopumilaceae</taxon>
        <taxon>Nitrosopumilus</taxon>
    </lineage>
</organism>
<sequence>MNETDIKFLESAFKKYYFEQFELIRVPERTSEREFGYQKFNSGMTRHISVKDDKELHLLLMQNVPSDVYCSNAYYSFPNLPMNEKDWKEADLIFDIDAKDLNLSCRGNHTLSICNECHEISNNSEKCSKCNSTKLEKKSLPCKNCIDSSKIEVKKLSEILTNDLSVNKDDIQVYFSGNEGFHIYVYNSQFQQNGSRERSELVDYIMFNGAIPEKFGMKKFKPNRNSFPDFDEAGWKGRFSKYVYGSKSKRSKIVSELLSNGYSSFQKTLDDVSENIGTKIDPNVTMDIHRIFRLPGSINSKSGLTKIHCKDLVKFDAYVDSSFLSDDSVEVLANCPIEFKLKNKKFGPYHNEKVSVPTFAAVYMVCKKLATIA</sequence>
<dbReference type="EC" id="2.7.7.-" evidence="1"/>
<dbReference type="EMBL" id="CP000866">
    <property type="protein sequence ID" value="ABX11966.1"/>
    <property type="molecule type" value="Genomic_DNA"/>
</dbReference>
<dbReference type="RefSeq" id="WP_012214453.1">
    <property type="nucleotide sequence ID" value="NC_010085.1"/>
</dbReference>
<dbReference type="SMR" id="A9A557"/>
<dbReference type="FunCoup" id="A9A557">
    <property type="interactions" value="1"/>
</dbReference>
<dbReference type="STRING" id="436308.Nmar_0066"/>
<dbReference type="EnsemblBacteria" id="ABX11966">
    <property type="protein sequence ID" value="ABX11966"/>
    <property type="gene ID" value="Nmar_0066"/>
</dbReference>
<dbReference type="GeneID" id="5772942"/>
<dbReference type="KEGG" id="nmr:Nmar_0066"/>
<dbReference type="eggNOG" id="arCOG04110">
    <property type="taxonomic scope" value="Archaea"/>
</dbReference>
<dbReference type="HOGENOM" id="CLU_056123_1_0_2"/>
<dbReference type="InParanoid" id="A9A557"/>
<dbReference type="OrthoDB" id="31125at2157"/>
<dbReference type="PhylomeDB" id="A9A557"/>
<dbReference type="Proteomes" id="UP000000792">
    <property type="component" value="Chromosome"/>
</dbReference>
<dbReference type="GO" id="GO:0000428">
    <property type="term" value="C:DNA-directed RNA polymerase complex"/>
    <property type="evidence" value="ECO:0007669"/>
    <property type="project" value="UniProtKB-KW"/>
</dbReference>
<dbReference type="GO" id="GO:1990077">
    <property type="term" value="C:primosome complex"/>
    <property type="evidence" value="ECO:0007669"/>
    <property type="project" value="UniProtKB-KW"/>
</dbReference>
<dbReference type="GO" id="GO:0003899">
    <property type="term" value="F:DNA-directed RNA polymerase activity"/>
    <property type="evidence" value="ECO:0007669"/>
    <property type="project" value="InterPro"/>
</dbReference>
<dbReference type="GO" id="GO:0046872">
    <property type="term" value="F:metal ion binding"/>
    <property type="evidence" value="ECO:0007669"/>
    <property type="project" value="UniProtKB-KW"/>
</dbReference>
<dbReference type="GO" id="GO:0006269">
    <property type="term" value="P:DNA replication, synthesis of primer"/>
    <property type="evidence" value="ECO:0000318"/>
    <property type="project" value="GO_Central"/>
</dbReference>
<dbReference type="Gene3D" id="3.90.920.10">
    <property type="entry name" value="DNA primase, PRIM domain"/>
    <property type="match status" value="1"/>
</dbReference>
<dbReference type="HAMAP" id="MF_00700">
    <property type="entry name" value="DNA_primase_sml_arc"/>
    <property type="match status" value="1"/>
</dbReference>
<dbReference type="InterPro" id="IPR002755">
    <property type="entry name" value="DNA_primase_S"/>
</dbReference>
<dbReference type="InterPro" id="IPR023639">
    <property type="entry name" value="DNA_primase_ssu_PriS"/>
</dbReference>
<dbReference type="PANTHER" id="PTHR10536">
    <property type="entry name" value="DNA PRIMASE SMALL SUBUNIT"/>
    <property type="match status" value="1"/>
</dbReference>
<dbReference type="Pfam" id="PF01896">
    <property type="entry name" value="DNA_primase_S"/>
    <property type="match status" value="1"/>
</dbReference>
<dbReference type="SUPFAM" id="SSF56747">
    <property type="entry name" value="Prim-pol domain"/>
    <property type="match status" value="1"/>
</dbReference>
<proteinExistence type="inferred from homology"/>